<accession>Q9H892</accession>
<accession>Q8N5H9</accession>
<accession>Q9NWY3</accession>
<feature type="chain" id="PRO_0000106395" description="Tetratricopeptide repeat protein 12">
    <location>
        <begin position="1"/>
        <end position="705"/>
    </location>
</feature>
<feature type="repeat" description="TPR 1">
    <location>
        <begin position="106"/>
        <end position="139"/>
    </location>
</feature>
<feature type="repeat" description="TPR 2">
    <location>
        <begin position="140"/>
        <end position="173"/>
    </location>
</feature>
<feature type="repeat" description="TPR 3">
    <location>
        <begin position="174"/>
        <end position="207"/>
    </location>
</feature>
<feature type="modified residue" description="Phosphothreonine" evidence="1">
    <location>
        <position position="71"/>
    </location>
</feature>
<feature type="splice variant" id="VSP_009119" description="In isoform 2." evidence="4">
    <original>FAAQLRKLHGLEILNSTMKYISDS</original>
    <variation>VPAESSHLQFGRESAAPEALSPRRWEEMFHMLVFSLSSVDPPPPPPQTCYP</variation>
    <location>
        <begin position="682"/>
        <end position="705"/>
    </location>
</feature>
<feature type="sequence variant" id="VAR_031431" description="In dbSNP:rs723077." evidence="2">
    <original>M</original>
    <variation>L</variation>
    <location>
        <position position="73"/>
    </location>
</feature>
<feature type="sequence variant" id="VAR_083923" description="In CILD45; reduced protein abundance; changed axonemal dynein complex assembly." evidence="3">
    <location>
        <begin position="203"/>
        <end position="705"/>
    </location>
</feature>
<feature type="sequence variant" id="VAR_031432" description="In dbSNP:rs35852218.">
    <original>M</original>
    <variation>L</variation>
    <location>
        <position position="468"/>
    </location>
</feature>
<feature type="sequence variant" id="VAR_083924" description="In CILD45; reduced protein abundance; changed axonemal dynein complex assembly." evidence="3">
    <location>
        <begin position="560"/>
        <end position="705"/>
    </location>
</feature>
<feature type="sequence variant" id="VAR_061903" description="In dbSNP:rs35303225.">
    <original>V</original>
    <variation>A</variation>
    <location>
        <position position="563"/>
    </location>
</feature>
<feature type="sequence variant" id="VAR_083925" description="In CILD45; reduced protein abundance; changed axonemal dynein complex assembly; loss of sperm axoneme assembly; dbSNP:rs372955658." evidence="3">
    <original>M</original>
    <variation>R</variation>
    <location>
        <position position="567"/>
    </location>
</feature>
<feature type="sequence conflict" description="In Ref. 1; BAA91242." evidence="5" ref="1">
    <original>F</original>
    <variation>Y</variation>
    <location>
        <position position="361"/>
    </location>
</feature>
<feature type="sequence conflict" description="In Ref. 1; BAA91242." evidence="5" ref="1">
    <original>Q</original>
    <variation>R</variation>
    <location>
        <position position="649"/>
    </location>
</feature>
<proteinExistence type="evidence at protein level"/>
<evidence type="ECO:0000250" key="1">
    <source>
        <dbReference type="UniProtKB" id="Q8BW49"/>
    </source>
</evidence>
<evidence type="ECO:0000269" key="2">
    <source>
    </source>
</evidence>
<evidence type="ECO:0000269" key="3">
    <source>
    </source>
</evidence>
<evidence type="ECO:0000303" key="4">
    <source>
    </source>
</evidence>
<evidence type="ECO:0000305" key="5"/>
<sequence>MDADKEKDLQKFLKNVDEISNLIQEMNSDDPVVQQKAVLETEKRLLLMEEDQEEDECRTTLNKTMISPPQTAMKSAEEINSEAFLASVEKDAKERAKRRRENKVLADALKEKGNEAFAEGNYETAILRYSEGLEKLKDMKVLYTNRAQAYMKLEDYEKALVDCEWALKCDEKCTKAYFHMGKANLALKNYSVSRECYKKILEINPKLQTQVKGYLNQVDLQEKADLQEKEAHELLDSGKNTAVTTKNLLETLSKPDQIPLFYAGGIEILTEMINECTEQTLFRMHNGFSIISDNEVIRRCFSTAGNDAVEEMVCVSVLKLWQAVCSRNEENQRVLVIHHDRARLLAALLSSKVLAIRQQSFALLLHLAQTESGRSLIINHLDLTRLLEALVSFLDFSDKEANTAMGLFTDLALEERFQVWFQANLPGVLPALTGVLKTDPKVSSSSALCQCIAIMGNLSAEPTTRRHMAACEEFGDGCLSLLARCEEDVDLFREVIYTLLGLMMNLCLQAPFVSEVWAVEVSRRCLSLLNSQDGGILTRAAGVLSRTLSSSLKIVEEALRAGVVKKMMKFLKTGGETASRYAIKILAICTNSYHEAREEVIRLDKKLSVMMKLLSSEDEVLVGNAALCLGNCMEVPNVASSLLKTDLLQVLLKLAGSDTQKTAVQVNAGIALGKLCTAEPRFAAQLRKLHGLEILNSTMKYISDS</sequence>
<organism>
    <name type="scientific">Homo sapiens</name>
    <name type="common">Human</name>
    <dbReference type="NCBI Taxonomy" id="9606"/>
    <lineage>
        <taxon>Eukaryota</taxon>
        <taxon>Metazoa</taxon>
        <taxon>Chordata</taxon>
        <taxon>Craniata</taxon>
        <taxon>Vertebrata</taxon>
        <taxon>Euteleostomi</taxon>
        <taxon>Mammalia</taxon>
        <taxon>Eutheria</taxon>
        <taxon>Euarchontoglires</taxon>
        <taxon>Primates</taxon>
        <taxon>Haplorrhini</taxon>
        <taxon>Catarrhini</taxon>
        <taxon>Hominidae</taxon>
        <taxon>Homo</taxon>
    </lineage>
</organism>
<comment type="function">
    <text evidence="3">Cytoplasmic protein that plays a role in the proper assembly of dynein arm complexes in motile cilia in both respiratory cells and sperm flagella.</text>
</comment>
<comment type="interaction">
    <interactant intactId="EBI-10274410">
        <id>Q9H892-2</id>
    </interactant>
    <interactant intactId="EBI-8643161">
        <id>Q9NX04</id>
        <label>AIRIM</label>
    </interactant>
    <organismsDiffer>false</organismsDiffer>
    <experiments>3</experiments>
</comment>
<comment type="interaction">
    <interactant intactId="EBI-10274410">
        <id>Q9H892-2</id>
    </interactant>
    <interactant intactId="EBI-744820">
        <id>Q9UM19</id>
        <label>HPCAL4</label>
    </interactant>
    <organismsDiffer>false</organismsDiffer>
    <experiments>3</experiments>
</comment>
<comment type="interaction">
    <interactant intactId="EBI-10274410">
        <id>Q9H892-2</id>
    </interactant>
    <interactant intactId="EBI-2548751">
        <id>Q8TD10</id>
        <label>MIPOL1</label>
    </interactant>
    <organismsDiffer>false</organismsDiffer>
    <experiments>6</experiments>
</comment>
<comment type="interaction">
    <interactant intactId="EBI-10274410">
        <id>Q9H892-2</id>
    </interactant>
    <interactant intactId="EBI-1307">
        <id>Q13153</id>
        <label>PAK1</label>
    </interactant>
    <organismsDiffer>false</organismsDiffer>
    <experiments>3</experiments>
</comment>
<comment type="subcellular location">
    <subcellularLocation>
        <location evidence="3">Cytoplasm</location>
    </subcellularLocation>
</comment>
<comment type="alternative products">
    <event type="alternative splicing"/>
    <isoform>
        <id>Q9H892-1</id>
        <name>1</name>
        <sequence type="displayed"/>
    </isoform>
    <isoform>
        <id>Q9H892-2</id>
        <name>2</name>
        <sequence type="described" ref="VSP_009119"/>
    </isoform>
</comment>
<comment type="tissue specificity">
    <text evidence="3">Expressed in testis and in epithelial cells of trachea and bronchial tube.</text>
</comment>
<comment type="disease" evidence="3">
    <disease id="DI-05780">
        <name>Ciliary dyskinesia, primary, 45</name>
        <acronym>CILD45</acronym>
        <description>A form of primary ciliary dyskinesia, a disorder characterized by abnormalities of motile cilia. Respiratory infections leading to chronic inflammation and bronchiectasis are recurrent, due to defects in the respiratory cilia. CILD45 is an autosomal recessive form characterized by onset of symptoms in infancy or early childhood. Male patients have infertility due to immotile sperm.</description>
        <dbReference type="MIM" id="618801"/>
    </disease>
    <text>The disease is caused by variants affecting the gene represented in this entry.</text>
</comment>
<comment type="miscellaneous">
    <molecule>Isoform 2</molecule>
    <text evidence="5">May be produced at very low levels due to a premature stop codon in the mRNA, leading to nonsense-mediated mRNA decay.</text>
</comment>
<comment type="sequence caution" evidence="5">
    <conflict type="erroneous initiation">
        <sequence resource="EMBL-CDS" id="BAA91242"/>
    </conflict>
    <text>Truncated N-terminus.</text>
</comment>
<name>TTC12_HUMAN</name>
<protein>
    <recommendedName>
        <fullName>Tetratricopeptide repeat protein 12</fullName>
        <shortName>TPR repeat protein 12</shortName>
    </recommendedName>
</protein>
<keyword id="KW-0025">Alternative splicing</keyword>
<keyword id="KW-1186">Ciliopathy</keyword>
<keyword id="KW-0970">Cilium biogenesis/degradation</keyword>
<keyword id="KW-0963">Cytoplasm</keyword>
<keyword id="KW-0225">Disease variant</keyword>
<keyword id="KW-0597">Phosphoprotein</keyword>
<keyword id="KW-0990">Primary ciliary dyskinesia</keyword>
<keyword id="KW-1267">Proteomics identification</keyword>
<keyword id="KW-1185">Reference proteome</keyword>
<keyword id="KW-0677">Repeat</keyword>
<keyword id="KW-0802">TPR repeat</keyword>
<dbReference type="EMBL" id="AK000542">
    <property type="protein sequence ID" value="BAA91242.1"/>
    <property type="status" value="ALT_INIT"/>
    <property type="molecule type" value="mRNA"/>
</dbReference>
<dbReference type="EMBL" id="AK023921">
    <property type="protein sequence ID" value="BAB14725.1"/>
    <property type="molecule type" value="mRNA"/>
</dbReference>
<dbReference type="EMBL" id="AP000880">
    <property type="status" value="NOT_ANNOTATED_CDS"/>
    <property type="molecule type" value="Genomic_DNA"/>
</dbReference>
<dbReference type="EMBL" id="AP002840">
    <property type="status" value="NOT_ANNOTATED_CDS"/>
    <property type="molecule type" value="Genomic_DNA"/>
</dbReference>
<dbReference type="EMBL" id="BC032355">
    <property type="protein sequence ID" value="AAH32355.1"/>
    <property type="molecule type" value="mRNA"/>
</dbReference>
<dbReference type="CCDS" id="CCDS8360.2">
    <molecule id="Q9H892-1"/>
</dbReference>
<dbReference type="RefSeq" id="NP_001305462.1">
    <property type="nucleotide sequence ID" value="NM_001318533.1"/>
</dbReference>
<dbReference type="RefSeq" id="NP_001364993.1">
    <molecule id="Q9H892-1"/>
    <property type="nucleotide sequence ID" value="NM_001378064.1"/>
</dbReference>
<dbReference type="RefSeq" id="NP_001364994.1">
    <molecule id="Q9H892-1"/>
    <property type="nucleotide sequence ID" value="NM_001378065.1"/>
</dbReference>
<dbReference type="RefSeq" id="NP_060338.3">
    <molecule id="Q9H892-1"/>
    <property type="nucleotide sequence ID" value="NM_017868.3"/>
</dbReference>
<dbReference type="SMR" id="Q9H892"/>
<dbReference type="BioGRID" id="120307">
    <property type="interactions" value="24"/>
</dbReference>
<dbReference type="FunCoup" id="Q9H892">
    <property type="interactions" value="277"/>
</dbReference>
<dbReference type="IntAct" id="Q9H892">
    <property type="interactions" value="14"/>
</dbReference>
<dbReference type="MINT" id="Q9H892"/>
<dbReference type="STRING" id="9606.ENSP00000419652"/>
<dbReference type="iPTMnet" id="Q9H892"/>
<dbReference type="PhosphoSitePlus" id="Q9H892"/>
<dbReference type="BioMuta" id="TTC12"/>
<dbReference type="DMDM" id="317373286"/>
<dbReference type="jPOST" id="Q9H892"/>
<dbReference type="MassIVE" id="Q9H892"/>
<dbReference type="PaxDb" id="9606-ENSP00000433757"/>
<dbReference type="PeptideAtlas" id="Q9H892"/>
<dbReference type="ProteomicsDB" id="81198">
    <molecule id="Q9H892-1"/>
</dbReference>
<dbReference type="ProteomicsDB" id="81199">
    <molecule id="Q9H892-2"/>
</dbReference>
<dbReference type="Pumba" id="Q9H892"/>
<dbReference type="Antibodypedia" id="32178">
    <property type="antibodies" value="80 antibodies from 17 providers"/>
</dbReference>
<dbReference type="DNASU" id="54970"/>
<dbReference type="Ensembl" id="ENST00000314756.7">
    <molecule id="Q9H892-2"/>
    <property type="protein sequence ID" value="ENSP00000315160.3"/>
    <property type="gene ID" value="ENSG00000149292.17"/>
</dbReference>
<dbReference type="Ensembl" id="ENST00000494714.5">
    <molecule id="Q9H892-2"/>
    <property type="protein sequence ID" value="ENSP00000435291.1"/>
    <property type="gene ID" value="ENSG00000149292.17"/>
</dbReference>
<dbReference type="Ensembl" id="ENST00000529221.6">
    <molecule id="Q9H892-1"/>
    <property type="protein sequence ID" value="ENSP00000433757.1"/>
    <property type="gene ID" value="ENSG00000149292.17"/>
</dbReference>
<dbReference type="GeneID" id="54970"/>
<dbReference type="KEGG" id="hsa:54970"/>
<dbReference type="MANE-Select" id="ENST00000529221.6">
    <property type="protein sequence ID" value="ENSP00000433757.1"/>
    <property type="RefSeq nucleotide sequence ID" value="NM_017868.4"/>
    <property type="RefSeq protein sequence ID" value="NP_060338.3"/>
</dbReference>
<dbReference type="UCSC" id="uc001pnu.3">
    <molecule id="Q9H892-1"/>
    <property type="organism name" value="human"/>
</dbReference>
<dbReference type="AGR" id="HGNC:23700"/>
<dbReference type="CTD" id="54970"/>
<dbReference type="DisGeNET" id="54970"/>
<dbReference type="GeneCards" id="TTC12"/>
<dbReference type="HGNC" id="HGNC:23700">
    <property type="gene designation" value="TTC12"/>
</dbReference>
<dbReference type="HPA" id="ENSG00000149292">
    <property type="expression patterns" value="Tissue enhanced (testis)"/>
</dbReference>
<dbReference type="MalaCards" id="TTC12"/>
<dbReference type="MIM" id="610732">
    <property type="type" value="gene"/>
</dbReference>
<dbReference type="MIM" id="618801">
    <property type="type" value="phenotype"/>
</dbReference>
<dbReference type="neXtProt" id="NX_Q9H892"/>
<dbReference type="OpenTargets" id="ENSG00000149292"/>
<dbReference type="Orphanet" id="244">
    <property type="disease" value="Primary ciliary dyskinesia"/>
</dbReference>
<dbReference type="PharmGKB" id="PA134886066"/>
<dbReference type="VEuPathDB" id="HostDB:ENSG00000149292"/>
<dbReference type="eggNOG" id="KOG0548">
    <property type="taxonomic scope" value="Eukaryota"/>
</dbReference>
<dbReference type="GeneTree" id="ENSGT00940000161758"/>
<dbReference type="InParanoid" id="Q9H892"/>
<dbReference type="OMA" id="AVQQNCA"/>
<dbReference type="OrthoDB" id="629492at2759"/>
<dbReference type="PAN-GO" id="Q9H892">
    <property type="GO annotations" value="4 GO annotations based on evolutionary models"/>
</dbReference>
<dbReference type="PhylomeDB" id="Q9H892"/>
<dbReference type="TreeFam" id="TF332406"/>
<dbReference type="PathwayCommons" id="Q9H892"/>
<dbReference type="SignaLink" id="Q9H892"/>
<dbReference type="BioGRID-ORCS" id="54970">
    <property type="hits" value="7 hits in 1156 CRISPR screens"/>
</dbReference>
<dbReference type="ChiTaRS" id="TTC12">
    <property type="organism name" value="human"/>
</dbReference>
<dbReference type="GenomeRNAi" id="54970"/>
<dbReference type="Pharos" id="Q9H892">
    <property type="development level" value="Tbio"/>
</dbReference>
<dbReference type="PRO" id="PR:Q9H892"/>
<dbReference type="Proteomes" id="UP000005640">
    <property type="component" value="Chromosome 11"/>
</dbReference>
<dbReference type="RNAct" id="Q9H892">
    <property type="molecule type" value="protein"/>
</dbReference>
<dbReference type="Bgee" id="ENSG00000149292">
    <property type="expression patterns" value="Expressed in sperm and 137 other cell types or tissues"/>
</dbReference>
<dbReference type="ExpressionAtlas" id="Q9H892">
    <property type="expression patterns" value="baseline and differential"/>
</dbReference>
<dbReference type="GO" id="GO:0005813">
    <property type="term" value="C:centrosome"/>
    <property type="evidence" value="ECO:0000314"/>
    <property type="project" value="MGI"/>
</dbReference>
<dbReference type="GO" id="GO:0005737">
    <property type="term" value="C:cytoplasm"/>
    <property type="evidence" value="ECO:0000314"/>
    <property type="project" value="UniProtKB"/>
</dbReference>
<dbReference type="GO" id="GO:0005829">
    <property type="term" value="C:cytosol"/>
    <property type="evidence" value="ECO:0000314"/>
    <property type="project" value="HPA"/>
</dbReference>
<dbReference type="GO" id="GO:0031965">
    <property type="term" value="C:nuclear membrane"/>
    <property type="evidence" value="ECO:0000314"/>
    <property type="project" value="HPA"/>
</dbReference>
<dbReference type="GO" id="GO:0005886">
    <property type="term" value="C:plasma membrane"/>
    <property type="evidence" value="ECO:0000314"/>
    <property type="project" value="HPA"/>
</dbReference>
<dbReference type="GO" id="GO:0070286">
    <property type="term" value="P:axonemal dynein complex assembly"/>
    <property type="evidence" value="ECO:0000315"/>
    <property type="project" value="UniProtKB"/>
</dbReference>
<dbReference type="GO" id="GO:0007288">
    <property type="term" value="P:sperm axoneme assembly"/>
    <property type="evidence" value="ECO:0000315"/>
    <property type="project" value="UniProtKB"/>
</dbReference>
<dbReference type="FunFam" id="1.25.40.10:FF:000391">
    <property type="entry name" value="Tetratricopeptide repeat domain 12"/>
    <property type="match status" value="1"/>
</dbReference>
<dbReference type="Gene3D" id="1.25.10.10">
    <property type="entry name" value="Leucine-rich Repeat Variant"/>
    <property type="match status" value="1"/>
</dbReference>
<dbReference type="Gene3D" id="1.25.40.10">
    <property type="entry name" value="Tetratricopeptide repeat domain"/>
    <property type="match status" value="1"/>
</dbReference>
<dbReference type="InterPro" id="IPR011989">
    <property type="entry name" value="ARM-like"/>
</dbReference>
<dbReference type="InterPro" id="IPR016024">
    <property type="entry name" value="ARM-type_fold"/>
</dbReference>
<dbReference type="InterPro" id="IPR011990">
    <property type="entry name" value="TPR-like_helical_dom_sf"/>
</dbReference>
<dbReference type="InterPro" id="IPR019734">
    <property type="entry name" value="TPR_rpt"/>
</dbReference>
<dbReference type="InterPro" id="IPR043195">
    <property type="entry name" value="TTC12"/>
</dbReference>
<dbReference type="PANTHER" id="PTHR46540">
    <property type="entry name" value="TETRATRICOPEPTIDE REPEAT PROTEIN 12"/>
    <property type="match status" value="1"/>
</dbReference>
<dbReference type="PANTHER" id="PTHR46540:SF1">
    <property type="entry name" value="TETRATRICOPEPTIDE REPEAT PROTEIN 12"/>
    <property type="match status" value="1"/>
</dbReference>
<dbReference type="Pfam" id="PF00515">
    <property type="entry name" value="TPR_1"/>
    <property type="match status" value="1"/>
</dbReference>
<dbReference type="Pfam" id="PF13181">
    <property type="entry name" value="TPR_8"/>
    <property type="match status" value="1"/>
</dbReference>
<dbReference type="SMART" id="SM00028">
    <property type="entry name" value="TPR"/>
    <property type="match status" value="3"/>
</dbReference>
<dbReference type="SUPFAM" id="SSF48371">
    <property type="entry name" value="ARM repeat"/>
    <property type="match status" value="1"/>
</dbReference>
<dbReference type="SUPFAM" id="SSF48452">
    <property type="entry name" value="TPR-like"/>
    <property type="match status" value="1"/>
</dbReference>
<dbReference type="PROSITE" id="PS50005">
    <property type="entry name" value="TPR"/>
    <property type="match status" value="3"/>
</dbReference>
<dbReference type="PROSITE" id="PS50293">
    <property type="entry name" value="TPR_REGION"/>
    <property type="match status" value="1"/>
</dbReference>
<reference key="1">
    <citation type="journal article" date="2004" name="Nat. Genet.">
        <title>Complete sequencing and characterization of 21,243 full-length human cDNAs.</title>
        <authorList>
            <person name="Ota T."/>
            <person name="Suzuki Y."/>
            <person name="Nishikawa T."/>
            <person name="Otsuki T."/>
            <person name="Sugiyama T."/>
            <person name="Irie R."/>
            <person name="Wakamatsu A."/>
            <person name="Hayashi K."/>
            <person name="Sato H."/>
            <person name="Nagai K."/>
            <person name="Kimura K."/>
            <person name="Makita H."/>
            <person name="Sekine M."/>
            <person name="Obayashi M."/>
            <person name="Nishi T."/>
            <person name="Shibahara T."/>
            <person name="Tanaka T."/>
            <person name="Ishii S."/>
            <person name="Yamamoto J."/>
            <person name="Saito K."/>
            <person name="Kawai Y."/>
            <person name="Isono Y."/>
            <person name="Nakamura Y."/>
            <person name="Nagahari K."/>
            <person name="Murakami K."/>
            <person name="Yasuda T."/>
            <person name="Iwayanagi T."/>
            <person name="Wagatsuma M."/>
            <person name="Shiratori A."/>
            <person name="Sudo H."/>
            <person name="Hosoiri T."/>
            <person name="Kaku Y."/>
            <person name="Kodaira H."/>
            <person name="Kondo H."/>
            <person name="Sugawara M."/>
            <person name="Takahashi M."/>
            <person name="Kanda K."/>
            <person name="Yokoi T."/>
            <person name="Furuya T."/>
            <person name="Kikkawa E."/>
            <person name="Omura Y."/>
            <person name="Abe K."/>
            <person name="Kamihara K."/>
            <person name="Katsuta N."/>
            <person name="Sato K."/>
            <person name="Tanikawa M."/>
            <person name="Yamazaki M."/>
            <person name="Ninomiya K."/>
            <person name="Ishibashi T."/>
            <person name="Yamashita H."/>
            <person name="Murakawa K."/>
            <person name="Fujimori K."/>
            <person name="Tanai H."/>
            <person name="Kimata M."/>
            <person name="Watanabe M."/>
            <person name="Hiraoka S."/>
            <person name="Chiba Y."/>
            <person name="Ishida S."/>
            <person name="Ono Y."/>
            <person name="Takiguchi S."/>
            <person name="Watanabe S."/>
            <person name="Yosida M."/>
            <person name="Hotuta T."/>
            <person name="Kusano J."/>
            <person name="Kanehori K."/>
            <person name="Takahashi-Fujii A."/>
            <person name="Hara H."/>
            <person name="Tanase T.-O."/>
            <person name="Nomura Y."/>
            <person name="Togiya S."/>
            <person name="Komai F."/>
            <person name="Hara R."/>
            <person name="Takeuchi K."/>
            <person name="Arita M."/>
            <person name="Imose N."/>
            <person name="Musashino K."/>
            <person name="Yuuki H."/>
            <person name="Oshima A."/>
            <person name="Sasaki N."/>
            <person name="Aotsuka S."/>
            <person name="Yoshikawa Y."/>
            <person name="Matsunawa H."/>
            <person name="Ichihara T."/>
            <person name="Shiohata N."/>
            <person name="Sano S."/>
            <person name="Moriya S."/>
            <person name="Momiyama H."/>
            <person name="Satoh N."/>
            <person name="Takami S."/>
            <person name="Terashima Y."/>
            <person name="Suzuki O."/>
            <person name="Nakagawa S."/>
            <person name="Senoh A."/>
            <person name="Mizoguchi H."/>
            <person name="Goto Y."/>
            <person name="Shimizu F."/>
            <person name="Wakebe H."/>
            <person name="Hishigaki H."/>
            <person name="Watanabe T."/>
            <person name="Sugiyama A."/>
            <person name="Takemoto M."/>
            <person name="Kawakami B."/>
            <person name="Yamazaki M."/>
            <person name="Watanabe K."/>
            <person name="Kumagai A."/>
            <person name="Itakura S."/>
            <person name="Fukuzumi Y."/>
            <person name="Fujimori Y."/>
            <person name="Komiyama M."/>
            <person name="Tashiro H."/>
            <person name="Tanigami A."/>
            <person name="Fujiwara T."/>
            <person name="Ono T."/>
            <person name="Yamada K."/>
            <person name="Fujii Y."/>
            <person name="Ozaki K."/>
            <person name="Hirao M."/>
            <person name="Ohmori Y."/>
            <person name="Kawabata A."/>
            <person name="Hikiji T."/>
            <person name="Kobatake N."/>
            <person name="Inagaki H."/>
            <person name="Ikema Y."/>
            <person name="Okamoto S."/>
            <person name="Okitani R."/>
            <person name="Kawakami T."/>
            <person name="Noguchi S."/>
            <person name="Itoh T."/>
            <person name="Shigeta K."/>
            <person name="Senba T."/>
            <person name="Matsumura K."/>
            <person name="Nakajima Y."/>
            <person name="Mizuno T."/>
            <person name="Morinaga M."/>
            <person name="Sasaki M."/>
            <person name="Togashi T."/>
            <person name="Oyama M."/>
            <person name="Hata H."/>
            <person name="Watanabe M."/>
            <person name="Komatsu T."/>
            <person name="Mizushima-Sugano J."/>
            <person name="Satoh T."/>
            <person name="Shirai Y."/>
            <person name="Takahashi Y."/>
            <person name="Nakagawa K."/>
            <person name="Okumura K."/>
            <person name="Nagase T."/>
            <person name="Nomura N."/>
            <person name="Kikuchi H."/>
            <person name="Masuho Y."/>
            <person name="Yamashita R."/>
            <person name="Nakai K."/>
            <person name="Yada T."/>
            <person name="Nakamura Y."/>
            <person name="Ohara O."/>
            <person name="Isogai T."/>
            <person name="Sugano S."/>
        </authorList>
    </citation>
    <scope>NUCLEOTIDE SEQUENCE [LARGE SCALE MRNA] (ISOFORM 1)</scope>
    <source>
        <tissue>Thyroid</tissue>
    </source>
</reference>
<reference key="2">
    <citation type="journal article" date="2006" name="Nature">
        <title>Human chromosome 11 DNA sequence and analysis including novel gene identification.</title>
        <authorList>
            <person name="Taylor T.D."/>
            <person name="Noguchi H."/>
            <person name="Totoki Y."/>
            <person name="Toyoda A."/>
            <person name="Kuroki Y."/>
            <person name="Dewar K."/>
            <person name="Lloyd C."/>
            <person name="Itoh T."/>
            <person name="Takeda T."/>
            <person name="Kim D.-W."/>
            <person name="She X."/>
            <person name="Barlow K.F."/>
            <person name="Bloom T."/>
            <person name="Bruford E."/>
            <person name="Chang J.L."/>
            <person name="Cuomo C.A."/>
            <person name="Eichler E."/>
            <person name="FitzGerald M.G."/>
            <person name="Jaffe D.B."/>
            <person name="LaButti K."/>
            <person name="Nicol R."/>
            <person name="Park H.-S."/>
            <person name="Seaman C."/>
            <person name="Sougnez C."/>
            <person name="Yang X."/>
            <person name="Zimmer A.R."/>
            <person name="Zody M.C."/>
            <person name="Birren B.W."/>
            <person name="Nusbaum C."/>
            <person name="Fujiyama A."/>
            <person name="Hattori M."/>
            <person name="Rogers J."/>
            <person name="Lander E.S."/>
            <person name="Sakaki Y."/>
        </authorList>
    </citation>
    <scope>NUCLEOTIDE SEQUENCE [LARGE SCALE GENOMIC DNA]</scope>
</reference>
<reference key="3">
    <citation type="journal article" date="2004" name="Genome Res.">
        <title>The status, quality, and expansion of the NIH full-length cDNA project: the Mammalian Gene Collection (MGC).</title>
        <authorList>
            <consortium name="The MGC Project Team"/>
        </authorList>
    </citation>
    <scope>NUCLEOTIDE SEQUENCE [LARGE SCALE MRNA] (ISOFORM 2)</scope>
    <scope>VARIANT LEU-73</scope>
    <source>
        <tissue>Blood</tissue>
    </source>
</reference>
<reference key="4">
    <citation type="journal article" date="2020" name="Am. J. Hum. Genet.">
        <title>TTC12 Loss-of-function mutations cause primary ciliary dyskinesia and unveil distinct dynein assembly mechanisms in motile cilia versus flagella.</title>
        <authorList>
            <person name="Thomas L."/>
            <person name="Bouhouche K."/>
            <person name="Whitfield M."/>
            <person name="Thouvenin G."/>
            <person name="Coste A."/>
            <person name="Louis B."/>
            <person name="Szymanski C."/>
            <person name="Bequignon E."/>
            <person name="Papon J.F."/>
            <person name="Castelli M."/>
            <person name="Lemullois M."/>
            <person name="Dhalluin X."/>
            <person name="Drouin-Garraud V."/>
            <person name="Montantin G."/>
            <person name="Tissier S."/>
            <person name="Duquesnoy P."/>
            <person name="Copin B."/>
            <person name="Dastot F."/>
            <person name="Couvet S."/>
            <person name="Barbotin A.L."/>
            <person name="Faucon C."/>
            <person name="Honore I."/>
            <person name="Maitre B."/>
            <person name="Beydon N."/>
            <person name="Tamalet A."/>
            <person name="Rives N."/>
            <person name="Koll F."/>
            <person name="Escudier E."/>
            <person name="Tassin A.M."/>
            <person name="Toure A."/>
            <person name="Mitchell V."/>
            <person name="Amselem S."/>
            <person name="Legendre M."/>
        </authorList>
    </citation>
    <scope>INVOLVEMENT IN CILD45</scope>
    <scope>VARIANTS CILD45 203-ILE--SER-705 DEL; 560-ARG--SER-705 DEL AND ARG-567</scope>
    <scope>CHARACTERIZATION OF VARIANTS CILD45 203-ILE--SER-705 DEL; 560-ARG--SER-705 DEL AND ARG-567</scope>
    <scope>FUNCTION</scope>
    <scope>SUBCELLULAR LOCATION</scope>
    <scope>TISSUE SPECIFICITY</scope>
</reference>
<gene>
    <name type="primary">TTC12</name>
</gene>